<accession>Q5FS37</accession>
<name>NTPP_GLUOX</name>
<keyword id="KW-0963">Cytoplasm</keyword>
<keyword id="KW-0378">Hydrolase</keyword>
<keyword id="KW-0546">Nucleotide metabolism</keyword>
<keyword id="KW-1185">Reference proteome</keyword>
<sequence>MMSFSTSLILASGSSARRMLLENAGLAVQARPVDLDEEALRRSCEEQGHTLSQTAIALADAKANLATRDVGFDELTVAADQILDLDGVAFAKPGSVAEAAEHLRRLRGRTHVLRTAVVLYKGGEKVWEHLASPRLTMRDFSDDFLKAYLEREGPAILSCVGAYRLEGPGIQLFSAVEGVQDAVMGLPLLPLLEELRELKVLAA</sequence>
<gene>
    <name type="ordered locus">GOX1038</name>
</gene>
<dbReference type="EC" id="3.6.1.9" evidence="1"/>
<dbReference type="EMBL" id="CP000009">
    <property type="protein sequence ID" value="AAW60809.1"/>
    <property type="molecule type" value="Genomic_DNA"/>
</dbReference>
<dbReference type="RefSeq" id="WP_011252601.1">
    <property type="nucleotide sequence ID" value="NC_006677.1"/>
</dbReference>
<dbReference type="SMR" id="Q5FS37"/>
<dbReference type="STRING" id="290633.GOX1038"/>
<dbReference type="KEGG" id="gox:GOX1038"/>
<dbReference type="eggNOG" id="COG0424">
    <property type="taxonomic scope" value="Bacteria"/>
</dbReference>
<dbReference type="HOGENOM" id="CLU_040416_1_1_5"/>
<dbReference type="Proteomes" id="UP000006375">
    <property type="component" value="Chromosome"/>
</dbReference>
<dbReference type="GO" id="GO:0005737">
    <property type="term" value="C:cytoplasm"/>
    <property type="evidence" value="ECO:0007669"/>
    <property type="project" value="UniProtKB-SubCell"/>
</dbReference>
<dbReference type="GO" id="GO:0047429">
    <property type="term" value="F:nucleoside triphosphate diphosphatase activity"/>
    <property type="evidence" value="ECO:0007669"/>
    <property type="project" value="UniProtKB-EC"/>
</dbReference>
<dbReference type="GO" id="GO:0009117">
    <property type="term" value="P:nucleotide metabolic process"/>
    <property type="evidence" value="ECO:0007669"/>
    <property type="project" value="UniProtKB-KW"/>
</dbReference>
<dbReference type="CDD" id="cd00555">
    <property type="entry name" value="Maf"/>
    <property type="match status" value="1"/>
</dbReference>
<dbReference type="Gene3D" id="3.90.950.10">
    <property type="match status" value="1"/>
</dbReference>
<dbReference type="HAMAP" id="MF_00528">
    <property type="entry name" value="Maf"/>
    <property type="match status" value="1"/>
</dbReference>
<dbReference type="InterPro" id="IPR029001">
    <property type="entry name" value="ITPase-like_fam"/>
</dbReference>
<dbReference type="InterPro" id="IPR003697">
    <property type="entry name" value="Maf-like"/>
</dbReference>
<dbReference type="PANTHER" id="PTHR43213">
    <property type="entry name" value="BIFUNCTIONAL DTTP/UTP PYROPHOSPHATASE/METHYLTRANSFERASE PROTEIN-RELATED"/>
    <property type="match status" value="1"/>
</dbReference>
<dbReference type="PANTHER" id="PTHR43213:SF5">
    <property type="entry name" value="BIFUNCTIONAL DTTP_UTP PYROPHOSPHATASE_METHYLTRANSFERASE PROTEIN-RELATED"/>
    <property type="match status" value="1"/>
</dbReference>
<dbReference type="Pfam" id="PF02545">
    <property type="entry name" value="Maf"/>
    <property type="match status" value="1"/>
</dbReference>
<dbReference type="PIRSF" id="PIRSF006305">
    <property type="entry name" value="Maf"/>
    <property type="match status" value="1"/>
</dbReference>
<dbReference type="SUPFAM" id="SSF52972">
    <property type="entry name" value="ITPase-like"/>
    <property type="match status" value="1"/>
</dbReference>
<protein>
    <recommendedName>
        <fullName evidence="1">Nucleoside triphosphate pyrophosphatase</fullName>
        <ecNumber evidence="1">3.6.1.9</ecNumber>
    </recommendedName>
    <alternativeName>
        <fullName evidence="1">Nucleotide pyrophosphatase</fullName>
        <shortName evidence="1">Nucleotide PPase</shortName>
    </alternativeName>
</protein>
<organism>
    <name type="scientific">Gluconobacter oxydans (strain 621H)</name>
    <name type="common">Gluconobacter suboxydans</name>
    <dbReference type="NCBI Taxonomy" id="290633"/>
    <lineage>
        <taxon>Bacteria</taxon>
        <taxon>Pseudomonadati</taxon>
        <taxon>Pseudomonadota</taxon>
        <taxon>Alphaproteobacteria</taxon>
        <taxon>Acetobacterales</taxon>
        <taxon>Acetobacteraceae</taxon>
        <taxon>Gluconobacter</taxon>
    </lineage>
</organism>
<reference key="1">
    <citation type="journal article" date="2005" name="Nat. Biotechnol.">
        <title>Complete genome sequence of the acetic acid bacterium Gluconobacter oxydans.</title>
        <authorList>
            <person name="Prust C."/>
            <person name="Hoffmeister M."/>
            <person name="Liesegang H."/>
            <person name="Wiezer A."/>
            <person name="Fricke W.F."/>
            <person name="Ehrenreich A."/>
            <person name="Gottschalk G."/>
            <person name="Deppenmeier U."/>
        </authorList>
    </citation>
    <scope>NUCLEOTIDE SEQUENCE [LARGE SCALE GENOMIC DNA]</scope>
    <source>
        <strain>621H</strain>
    </source>
</reference>
<proteinExistence type="inferred from homology"/>
<feature type="chain" id="PRO_0000267315" description="Nucleoside triphosphate pyrophosphatase">
    <location>
        <begin position="1"/>
        <end position="203"/>
    </location>
</feature>
<feature type="active site" description="Proton acceptor" evidence="1">
    <location>
        <position position="80"/>
    </location>
</feature>
<comment type="function">
    <text evidence="1">Nucleoside triphosphate pyrophosphatase. May have a dual role in cell division arrest and in preventing the incorporation of modified nucleotides into cellular nucleic acids.</text>
</comment>
<comment type="catalytic activity">
    <reaction evidence="1">
        <text>a ribonucleoside 5'-triphosphate + H2O = a ribonucleoside 5'-phosphate + diphosphate + H(+)</text>
        <dbReference type="Rhea" id="RHEA:23996"/>
        <dbReference type="ChEBI" id="CHEBI:15377"/>
        <dbReference type="ChEBI" id="CHEBI:15378"/>
        <dbReference type="ChEBI" id="CHEBI:33019"/>
        <dbReference type="ChEBI" id="CHEBI:58043"/>
        <dbReference type="ChEBI" id="CHEBI:61557"/>
        <dbReference type="EC" id="3.6.1.9"/>
    </reaction>
</comment>
<comment type="catalytic activity">
    <reaction evidence="1">
        <text>a 2'-deoxyribonucleoside 5'-triphosphate + H2O = a 2'-deoxyribonucleoside 5'-phosphate + diphosphate + H(+)</text>
        <dbReference type="Rhea" id="RHEA:44644"/>
        <dbReference type="ChEBI" id="CHEBI:15377"/>
        <dbReference type="ChEBI" id="CHEBI:15378"/>
        <dbReference type="ChEBI" id="CHEBI:33019"/>
        <dbReference type="ChEBI" id="CHEBI:61560"/>
        <dbReference type="ChEBI" id="CHEBI:65317"/>
        <dbReference type="EC" id="3.6.1.9"/>
    </reaction>
</comment>
<comment type="cofactor">
    <cofactor evidence="1">
        <name>a divalent metal cation</name>
        <dbReference type="ChEBI" id="CHEBI:60240"/>
    </cofactor>
</comment>
<comment type="subcellular location">
    <subcellularLocation>
        <location evidence="1">Cytoplasm</location>
    </subcellularLocation>
</comment>
<comment type="similarity">
    <text evidence="1">Belongs to the Maf family.</text>
</comment>
<evidence type="ECO:0000255" key="1">
    <source>
        <dbReference type="HAMAP-Rule" id="MF_00528"/>
    </source>
</evidence>